<evidence type="ECO:0000250" key="1"/>
<evidence type="ECO:0000255" key="2">
    <source>
        <dbReference type="PROSITE-ProRule" id="PRU00108"/>
    </source>
</evidence>
<evidence type="ECO:0000256" key="3">
    <source>
        <dbReference type="SAM" id="MobiDB-lite"/>
    </source>
</evidence>
<evidence type="ECO:0000305" key="4"/>
<organism>
    <name type="scientific">Miopithecus talapoin</name>
    <name type="common">Angolan talapoin</name>
    <name type="synonym">Cercopithecus talapoin</name>
    <dbReference type="NCBI Taxonomy" id="36231"/>
    <lineage>
        <taxon>Eukaryota</taxon>
        <taxon>Metazoa</taxon>
        <taxon>Chordata</taxon>
        <taxon>Craniata</taxon>
        <taxon>Vertebrata</taxon>
        <taxon>Euteleostomi</taxon>
        <taxon>Mammalia</taxon>
        <taxon>Eutheria</taxon>
        <taxon>Euarchontoglires</taxon>
        <taxon>Primates</taxon>
        <taxon>Haplorrhini</taxon>
        <taxon>Catarrhini</taxon>
        <taxon>Cercopithecidae</taxon>
        <taxon>Cercopithecinae</taxon>
        <taxon>Miopithecus</taxon>
    </lineage>
</organism>
<name>TF2LX_MIOTA</name>
<feature type="chain" id="PRO_0000049328" description="Homeobox protein TGIF2LX">
    <location>
        <begin position="1"/>
        <end position="249"/>
    </location>
</feature>
<feature type="DNA-binding region" description="Homeobox; TALE-type" evidence="2">
    <location>
        <begin position="55"/>
        <end position="118"/>
    </location>
</feature>
<feature type="region of interest" description="Disordered" evidence="3">
    <location>
        <begin position="1"/>
        <end position="60"/>
    </location>
</feature>
<feature type="region of interest" description="Disordered" evidence="3">
    <location>
        <begin position="121"/>
        <end position="215"/>
    </location>
</feature>
<feature type="compositionally biased region" description="Basic and acidic residues" evidence="3">
    <location>
        <begin position="1"/>
        <end position="27"/>
    </location>
</feature>
<feature type="compositionally biased region" description="Polar residues" evidence="3">
    <location>
        <begin position="28"/>
        <end position="46"/>
    </location>
</feature>
<feature type="compositionally biased region" description="Polar residues" evidence="3">
    <location>
        <begin position="159"/>
        <end position="172"/>
    </location>
</feature>
<feature type="compositionally biased region" description="Low complexity" evidence="3">
    <location>
        <begin position="202"/>
        <end position="215"/>
    </location>
</feature>
<keyword id="KW-0238">DNA-binding</keyword>
<keyword id="KW-0371">Homeobox</keyword>
<keyword id="KW-0539">Nucleus</keyword>
<keyword id="KW-0804">Transcription</keyword>
<keyword id="KW-0805">Transcription regulation</keyword>
<accession>Q8MID1</accession>
<protein>
    <recommendedName>
        <fullName>Homeobox protein TGIF2LX</fullName>
    </recommendedName>
    <alternativeName>
        <fullName>TGF-beta-induced transcription factor 2-like protein</fullName>
    </alternativeName>
    <alternativeName>
        <fullName>TGFB-induced factor 2-like protein, X-linked</fullName>
    </alternativeName>
    <alternativeName>
        <fullName>TGIF-like on the X</fullName>
    </alternativeName>
</protein>
<sequence length="249" mass="27601">MEAAADRPAETRSRVEKDSRRAKKDSPAKTQSPAQDTSIMLRSNADTGKVLALPEHKKKRKGYLPAESVKILRDWMYKHRFRAYPSEAEKRMLSKKTNLSLSQISNWFINARRRILPDMLQRRGNDPTVGHKTGKDAHATHLQSTDASVPAKSGPRGSDNVQSLPLRSSPKGQMSGEKIPEPGSAPSQKLTMIAQPKKKVKVSNITSSSSPEPVSTEEYADFSSFQLLVDAAVQRAAELELEKNQESNP</sequence>
<comment type="function">
    <text evidence="1">May have a transcription role in testis.</text>
</comment>
<comment type="subcellular location">
    <subcellularLocation>
        <location evidence="2">Nucleus</location>
    </subcellularLocation>
</comment>
<comment type="similarity">
    <text evidence="4">Belongs to the TALE/TGIF homeobox family.</text>
</comment>
<proteinExistence type="evidence at transcript level"/>
<dbReference type="EMBL" id="AJ345077">
    <property type="protein sequence ID" value="CAC87899.1"/>
    <property type="molecule type" value="mRNA"/>
</dbReference>
<dbReference type="SMR" id="Q8MID1"/>
<dbReference type="GO" id="GO:0005634">
    <property type="term" value="C:nucleus"/>
    <property type="evidence" value="ECO:0007669"/>
    <property type="project" value="UniProtKB-SubCell"/>
</dbReference>
<dbReference type="GO" id="GO:0003677">
    <property type="term" value="F:DNA binding"/>
    <property type="evidence" value="ECO:0007669"/>
    <property type="project" value="UniProtKB-KW"/>
</dbReference>
<dbReference type="GO" id="GO:0006355">
    <property type="term" value="P:regulation of DNA-templated transcription"/>
    <property type="evidence" value="ECO:0007669"/>
    <property type="project" value="InterPro"/>
</dbReference>
<dbReference type="CDD" id="cd00086">
    <property type="entry name" value="homeodomain"/>
    <property type="match status" value="1"/>
</dbReference>
<dbReference type="FunFam" id="1.10.10.60:FF:000059">
    <property type="entry name" value="TGFB-induced factor homeobox 1"/>
    <property type="match status" value="1"/>
</dbReference>
<dbReference type="Gene3D" id="1.10.10.60">
    <property type="entry name" value="Homeodomain-like"/>
    <property type="match status" value="1"/>
</dbReference>
<dbReference type="InterPro" id="IPR001356">
    <property type="entry name" value="HD"/>
</dbReference>
<dbReference type="InterPro" id="IPR009057">
    <property type="entry name" value="Homeodomain-like_sf"/>
</dbReference>
<dbReference type="InterPro" id="IPR008422">
    <property type="entry name" value="KN_HD"/>
</dbReference>
<dbReference type="InterPro" id="IPR050224">
    <property type="entry name" value="TALE_homeobox"/>
</dbReference>
<dbReference type="PANTHER" id="PTHR11850">
    <property type="entry name" value="HOMEOBOX PROTEIN TRANSCRIPTION FACTORS"/>
    <property type="match status" value="1"/>
</dbReference>
<dbReference type="Pfam" id="PF05920">
    <property type="entry name" value="Homeobox_KN"/>
    <property type="match status" value="1"/>
</dbReference>
<dbReference type="SMART" id="SM00389">
    <property type="entry name" value="HOX"/>
    <property type="match status" value="1"/>
</dbReference>
<dbReference type="SUPFAM" id="SSF46689">
    <property type="entry name" value="Homeodomain-like"/>
    <property type="match status" value="1"/>
</dbReference>
<dbReference type="PROSITE" id="PS50071">
    <property type="entry name" value="HOMEOBOX_2"/>
    <property type="match status" value="1"/>
</dbReference>
<gene>
    <name type="primary">TGIF2LX</name>
    <name type="synonym">TGIFLX</name>
</gene>
<reference key="1">
    <citation type="submission" date="2001-09" db="EMBL/GenBank/DDBJ databases">
        <title>Characterisation of a TGIF-like protein gene in the human Xq21.3-Yp11.2 homology block.</title>
        <authorList>
            <person name="Blanco-Arias P."/>
        </authorList>
    </citation>
    <scope>NUCLEOTIDE SEQUENCE [MRNA]</scope>
</reference>